<feature type="chain" id="PRO_0000255158" description="Lipid-A-disaccharide synthase">
    <location>
        <begin position="1"/>
        <end position="383"/>
    </location>
</feature>
<keyword id="KW-0328">Glycosyltransferase</keyword>
<keyword id="KW-0441">Lipid A biosynthesis</keyword>
<keyword id="KW-0444">Lipid biosynthesis</keyword>
<keyword id="KW-0443">Lipid metabolism</keyword>
<keyword id="KW-1185">Reference proteome</keyword>
<keyword id="KW-0808">Transferase</keyword>
<dbReference type="EC" id="2.4.1.182" evidence="1"/>
<dbReference type="EMBL" id="AM286690">
    <property type="protein sequence ID" value="CAL16604.1"/>
    <property type="molecule type" value="Genomic_DNA"/>
</dbReference>
<dbReference type="RefSeq" id="WP_011588439.1">
    <property type="nucleotide sequence ID" value="NC_008260.1"/>
</dbReference>
<dbReference type="SMR" id="Q0VQE4"/>
<dbReference type="STRING" id="393595.ABO_1156"/>
<dbReference type="CAZy" id="GT19">
    <property type="family name" value="Glycosyltransferase Family 19"/>
</dbReference>
<dbReference type="KEGG" id="abo:ABO_1156"/>
<dbReference type="eggNOG" id="COG0763">
    <property type="taxonomic scope" value="Bacteria"/>
</dbReference>
<dbReference type="HOGENOM" id="CLU_036577_3_0_6"/>
<dbReference type="OrthoDB" id="9801642at2"/>
<dbReference type="UniPathway" id="UPA00973"/>
<dbReference type="Proteomes" id="UP000008871">
    <property type="component" value="Chromosome"/>
</dbReference>
<dbReference type="GO" id="GO:0016020">
    <property type="term" value="C:membrane"/>
    <property type="evidence" value="ECO:0007669"/>
    <property type="project" value="GOC"/>
</dbReference>
<dbReference type="GO" id="GO:0008915">
    <property type="term" value="F:lipid-A-disaccharide synthase activity"/>
    <property type="evidence" value="ECO:0007669"/>
    <property type="project" value="UniProtKB-UniRule"/>
</dbReference>
<dbReference type="GO" id="GO:0005543">
    <property type="term" value="F:phospholipid binding"/>
    <property type="evidence" value="ECO:0007669"/>
    <property type="project" value="TreeGrafter"/>
</dbReference>
<dbReference type="GO" id="GO:0009245">
    <property type="term" value="P:lipid A biosynthetic process"/>
    <property type="evidence" value="ECO:0007669"/>
    <property type="project" value="UniProtKB-UniRule"/>
</dbReference>
<dbReference type="CDD" id="cd01635">
    <property type="entry name" value="Glycosyltransferase_GTB-type"/>
    <property type="match status" value="1"/>
</dbReference>
<dbReference type="Gene3D" id="3.40.50.2000">
    <property type="entry name" value="Glycogen Phosphorylase B"/>
    <property type="match status" value="1"/>
</dbReference>
<dbReference type="HAMAP" id="MF_00392">
    <property type="entry name" value="LpxB"/>
    <property type="match status" value="1"/>
</dbReference>
<dbReference type="InterPro" id="IPR003835">
    <property type="entry name" value="Glyco_trans_19"/>
</dbReference>
<dbReference type="NCBIfam" id="TIGR00215">
    <property type="entry name" value="lpxB"/>
    <property type="match status" value="1"/>
</dbReference>
<dbReference type="PANTHER" id="PTHR30372">
    <property type="entry name" value="LIPID-A-DISACCHARIDE SYNTHASE"/>
    <property type="match status" value="1"/>
</dbReference>
<dbReference type="PANTHER" id="PTHR30372:SF4">
    <property type="entry name" value="LIPID-A-DISACCHARIDE SYNTHASE, MITOCHONDRIAL-RELATED"/>
    <property type="match status" value="1"/>
</dbReference>
<dbReference type="Pfam" id="PF02684">
    <property type="entry name" value="LpxB"/>
    <property type="match status" value="1"/>
</dbReference>
<dbReference type="SUPFAM" id="SSF53756">
    <property type="entry name" value="UDP-Glycosyltransferase/glycogen phosphorylase"/>
    <property type="match status" value="1"/>
</dbReference>
<comment type="function">
    <text evidence="1">Condensation of UDP-2,3-diacylglucosamine and 2,3-diacylglucosamine-1-phosphate to form lipid A disaccharide, a precursor of lipid A, a phosphorylated glycolipid that anchors the lipopolysaccharide to the outer membrane of the cell.</text>
</comment>
<comment type="catalytic activity">
    <reaction evidence="1">
        <text>a lipid X + a UDP-2-N,3-O-bis[(3R)-3-hydroxyacyl]-alpha-D-glucosamine = a lipid A disaccharide + UDP + H(+)</text>
        <dbReference type="Rhea" id="RHEA:67828"/>
        <dbReference type="ChEBI" id="CHEBI:15378"/>
        <dbReference type="ChEBI" id="CHEBI:58223"/>
        <dbReference type="ChEBI" id="CHEBI:137748"/>
        <dbReference type="ChEBI" id="CHEBI:176338"/>
        <dbReference type="ChEBI" id="CHEBI:176343"/>
        <dbReference type="EC" id="2.4.1.182"/>
    </reaction>
</comment>
<comment type="pathway">
    <text evidence="1">Bacterial outer membrane biogenesis; LPS lipid A biosynthesis.</text>
</comment>
<comment type="similarity">
    <text evidence="1">Belongs to the LpxB family.</text>
</comment>
<reference key="1">
    <citation type="journal article" date="2006" name="Nat. Biotechnol.">
        <title>Genome sequence of the ubiquitous hydrocarbon-degrading marine bacterium Alcanivorax borkumensis.</title>
        <authorList>
            <person name="Schneiker S."/>
            <person name="Martins dos Santos V.A.P."/>
            <person name="Bartels D."/>
            <person name="Bekel T."/>
            <person name="Brecht M."/>
            <person name="Buhrmester J."/>
            <person name="Chernikova T.N."/>
            <person name="Denaro R."/>
            <person name="Ferrer M."/>
            <person name="Gertler C."/>
            <person name="Goesmann A."/>
            <person name="Golyshina O.V."/>
            <person name="Kaminski F."/>
            <person name="Khachane A.N."/>
            <person name="Lang S."/>
            <person name="Linke B."/>
            <person name="McHardy A.C."/>
            <person name="Meyer F."/>
            <person name="Nechitaylo T."/>
            <person name="Puehler A."/>
            <person name="Regenhardt D."/>
            <person name="Rupp O."/>
            <person name="Sabirova J.S."/>
            <person name="Selbitschka W."/>
            <person name="Yakimov M.M."/>
            <person name="Timmis K.N."/>
            <person name="Vorhoelter F.-J."/>
            <person name="Weidner S."/>
            <person name="Kaiser O."/>
            <person name="Golyshin P.N."/>
        </authorList>
    </citation>
    <scope>NUCLEOTIDE SEQUENCE [LARGE SCALE GENOMIC DNA]</scope>
    <source>
        <strain>ATCC 700651 / DSM 11573 / NCIMB 13689 / SK2</strain>
    </source>
</reference>
<accession>Q0VQE4</accession>
<gene>
    <name evidence="1" type="primary">lpxB</name>
    <name type="ordered locus">ABO_1156</name>
</gene>
<evidence type="ECO:0000255" key="1">
    <source>
        <dbReference type="HAMAP-Rule" id="MF_00392"/>
    </source>
</evidence>
<organism>
    <name type="scientific">Alcanivorax borkumensis (strain ATCC 700651 / DSM 11573 / NCIMB 13689 / SK2)</name>
    <dbReference type="NCBI Taxonomy" id="393595"/>
    <lineage>
        <taxon>Bacteria</taxon>
        <taxon>Pseudomonadati</taxon>
        <taxon>Pseudomonadota</taxon>
        <taxon>Gammaproteobacteria</taxon>
        <taxon>Oceanospirillales</taxon>
        <taxon>Alcanivoracaceae</taxon>
        <taxon>Alcanivorax</taxon>
    </lineage>
</organism>
<protein>
    <recommendedName>
        <fullName evidence="1">Lipid-A-disaccharide synthase</fullName>
        <ecNumber evidence="1">2.4.1.182</ecNumber>
    </recommendedName>
</protein>
<sequence>MTQRKDAPLVALIAGEASGDILGAGLMQALENRYPGARFIGVGGEEMAQAGLTSLFPMEKLSVMGITEVLSHLPELLRLRKSLVRFLLEQRPDVVVGIDSPDFTLPIARRLHDRGLKTVHYVSPSVWAWRQGRIKGIKKSIDLMLTLLPFEARFYEEHDVPVAFVGHPLADRIPLETDVAGARKALALDRDARILAVLPGSRGGEVGQLMPAFLDAMVALNHQDPTLQYVIPAANAARREQIQTLLNTQPNLPVSLIDGQSRTVMAAADVVLMASGTATLEGLLLNKPMVVGYRVGAVTYAIVSRLIKSEFFSLPNLLCRQEMVPELLQSQLTTEAIVAAVRRWFDQPEQAQALKIQFQSVHQQLRGGASEKAAAAVARLLEA</sequence>
<name>LPXB_ALCBS</name>
<proteinExistence type="inferred from homology"/>